<gene>
    <name evidence="33" type="primary">AQP2</name>
</gene>
<sequence>MWELRSIAFSRAVFAEFLATLLFVFFGLGSALNWPQALPSVLQIAMAFGLGIGTLVQALGHISGAHINPAVTVACLVGCHVSVLRAAFYVAAQLLGAVAGAALLHEITPADIRGDLAVNALSNSTTAGQAVTVELFLTLQLVLCIFASTDERRGENPGTPALSIGFSVALGHLLGIHYTGCSMNPARSLAPAVVTGKFDDHWVFWIGPLVGAILGSLLYNYVLFPPAKSLSERLAVLKGLEPDTDWEEREVRRRQSVELHSPQSLPRGTKA</sequence>
<dbReference type="EMBL" id="Z29491">
    <property type="protein sequence ID" value="CAA82627.1"/>
    <property type="molecule type" value="Genomic_DNA"/>
</dbReference>
<dbReference type="EMBL" id="D31846">
    <property type="protein sequence ID" value="BAA06632.1"/>
    <property type="molecule type" value="Genomic_DNA"/>
</dbReference>
<dbReference type="EMBL" id="S73196">
    <property type="protein sequence ID" value="AAB31999.1"/>
    <property type="molecule type" value="mRNA"/>
</dbReference>
<dbReference type="EMBL" id="S73197">
    <property type="protein sequence ID" value="AAB31998.1"/>
    <property type="molecule type" value="mRNA"/>
</dbReference>
<dbReference type="EMBL" id="AF147093">
    <property type="protein sequence ID" value="AAD38692.1"/>
    <property type="molecule type" value="Genomic_DNA"/>
</dbReference>
<dbReference type="EMBL" id="AF147092">
    <property type="protein sequence ID" value="AAD38692.1"/>
    <property type="status" value="JOINED"/>
    <property type="molecule type" value="Genomic_DNA"/>
</dbReference>
<dbReference type="EMBL" id="BC042496">
    <property type="protein sequence ID" value="AAH42496.1"/>
    <property type="molecule type" value="mRNA"/>
</dbReference>
<dbReference type="CCDS" id="CCDS8792.1"/>
<dbReference type="PIR" id="A53442">
    <property type="entry name" value="A53442"/>
</dbReference>
<dbReference type="PIR" id="I64818">
    <property type="entry name" value="I64818"/>
</dbReference>
<dbReference type="RefSeq" id="NP_000477.1">
    <property type="nucleotide sequence ID" value="NM_000486.6"/>
</dbReference>
<dbReference type="PDB" id="4NEF">
    <property type="method" value="X-ray"/>
    <property type="resolution" value="2.75 A"/>
    <property type="chains" value="A/B/C/D=3-241"/>
</dbReference>
<dbReference type="PDB" id="4OJ2">
    <property type="method" value="X-ray"/>
    <property type="resolution" value="3.05 A"/>
    <property type="chains" value="X=1-271"/>
</dbReference>
<dbReference type="PDB" id="6QF5">
    <property type="method" value="X-ray"/>
    <property type="resolution" value="3.70 A"/>
    <property type="chains" value="A/B/C/D=3-242"/>
</dbReference>
<dbReference type="PDB" id="8GCL">
    <property type="method" value="EM"/>
    <property type="resolution" value="2.90 A"/>
    <property type="chains" value="A=1-271"/>
</dbReference>
<dbReference type="PDB" id="8GHJ">
    <property type="method" value="X-ray"/>
    <property type="resolution" value="3.90 A"/>
    <property type="chains" value="A/B/C/D=3-241"/>
</dbReference>
<dbReference type="PDB" id="8OEE">
    <property type="method" value="X-ray"/>
    <property type="resolution" value="3.15 A"/>
    <property type="chains" value="A/B/C/D=3-241"/>
</dbReference>
<dbReference type="PDB" id="8VVX">
    <property type="method" value="EM"/>
    <property type="resolution" value="2.60 A"/>
    <property type="chains" value="A/B/X/Y=5-256"/>
</dbReference>
<dbReference type="PDBsum" id="4NEF"/>
<dbReference type="PDBsum" id="4OJ2"/>
<dbReference type="PDBsum" id="6QF5"/>
<dbReference type="PDBsum" id="8GCL"/>
<dbReference type="PDBsum" id="8GHJ"/>
<dbReference type="PDBsum" id="8OEE"/>
<dbReference type="PDBsum" id="8VVX"/>
<dbReference type="EMDB" id="EMD-29934"/>
<dbReference type="SMR" id="P41181"/>
<dbReference type="BioGRID" id="106855">
    <property type="interactions" value="67"/>
</dbReference>
<dbReference type="FunCoup" id="P41181">
    <property type="interactions" value="167"/>
</dbReference>
<dbReference type="IntAct" id="P41181">
    <property type="interactions" value="38"/>
</dbReference>
<dbReference type="STRING" id="9606.ENSP00000199280"/>
<dbReference type="ChEMBL" id="CHEMBL4523224"/>
<dbReference type="TCDB" id="1.A.8.8.8">
    <property type="family name" value="the major intrinsic protein (mip) family"/>
</dbReference>
<dbReference type="GlyCosmos" id="P41181">
    <property type="glycosylation" value="1 site, No reported glycans"/>
</dbReference>
<dbReference type="GlyGen" id="P41181">
    <property type="glycosylation" value="4 sites"/>
</dbReference>
<dbReference type="iPTMnet" id="P41181"/>
<dbReference type="PhosphoSitePlus" id="P41181"/>
<dbReference type="BioMuta" id="AQP2"/>
<dbReference type="DMDM" id="728874"/>
<dbReference type="MassIVE" id="P41181"/>
<dbReference type="PaxDb" id="9606-ENSP00000199280"/>
<dbReference type="PeptideAtlas" id="P41181"/>
<dbReference type="ProteomicsDB" id="55412"/>
<dbReference type="Antibodypedia" id="4081">
    <property type="antibodies" value="594 antibodies from 40 providers"/>
</dbReference>
<dbReference type="DNASU" id="359"/>
<dbReference type="Ensembl" id="ENST00000199280.4">
    <property type="protein sequence ID" value="ENSP00000199280.3"/>
    <property type="gene ID" value="ENSG00000167580.8"/>
</dbReference>
<dbReference type="GeneID" id="359"/>
<dbReference type="KEGG" id="hsa:359"/>
<dbReference type="MANE-Select" id="ENST00000199280.4">
    <property type="protein sequence ID" value="ENSP00000199280.3"/>
    <property type="RefSeq nucleotide sequence ID" value="NM_000486.6"/>
    <property type="RefSeq protein sequence ID" value="NP_000477.1"/>
</dbReference>
<dbReference type="UCSC" id="uc001rvn.4">
    <property type="organism name" value="human"/>
</dbReference>
<dbReference type="AGR" id="HGNC:634"/>
<dbReference type="CTD" id="359"/>
<dbReference type="DisGeNET" id="359"/>
<dbReference type="GeneCards" id="AQP2"/>
<dbReference type="GeneReviews" id="AQP2"/>
<dbReference type="HGNC" id="HGNC:634">
    <property type="gene designation" value="AQP2"/>
</dbReference>
<dbReference type="HPA" id="ENSG00000167580">
    <property type="expression patterns" value="Group enriched (kidney, seminal vesicle)"/>
</dbReference>
<dbReference type="MalaCards" id="AQP2"/>
<dbReference type="MIM" id="107777">
    <property type="type" value="gene"/>
</dbReference>
<dbReference type="MIM" id="125800">
    <property type="type" value="phenotype"/>
</dbReference>
<dbReference type="neXtProt" id="NX_P41181"/>
<dbReference type="OpenTargets" id="ENSG00000167580"/>
<dbReference type="Orphanet" id="223">
    <property type="disease" value="Arginine vasopressin resistance"/>
</dbReference>
<dbReference type="PharmGKB" id="PA24920"/>
<dbReference type="VEuPathDB" id="HostDB:ENSG00000167580"/>
<dbReference type="eggNOG" id="KOG0223">
    <property type="taxonomic scope" value="Eukaryota"/>
</dbReference>
<dbReference type="GeneTree" id="ENSGT00940000160612"/>
<dbReference type="InParanoid" id="P41181"/>
<dbReference type="OMA" id="RAFLYWI"/>
<dbReference type="OrthoDB" id="3222at2759"/>
<dbReference type="PAN-GO" id="P41181">
    <property type="GO annotations" value="5 GO annotations based on evolutionary models"/>
</dbReference>
<dbReference type="PhylomeDB" id="P41181"/>
<dbReference type="TreeFam" id="TF312940"/>
<dbReference type="PathwayCommons" id="P41181"/>
<dbReference type="Reactome" id="R-HSA-432040">
    <property type="pathway name" value="Vasopressin regulates renal water homeostasis via Aquaporins"/>
</dbReference>
<dbReference type="Reactome" id="R-HSA-432047">
    <property type="pathway name" value="Passive transport by Aquaporins"/>
</dbReference>
<dbReference type="SignaLink" id="P41181"/>
<dbReference type="SIGNOR" id="P41181"/>
<dbReference type="BioGRID-ORCS" id="359">
    <property type="hits" value="24 hits in 1152 CRISPR screens"/>
</dbReference>
<dbReference type="EvolutionaryTrace" id="P41181"/>
<dbReference type="GeneWiki" id="Aquaporin_2"/>
<dbReference type="GenomeRNAi" id="359"/>
<dbReference type="Pharos" id="P41181">
    <property type="development level" value="Tbio"/>
</dbReference>
<dbReference type="PRO" id="PR:P41181"/>
<dbReference type="Proteomes" id="UP000005640">
    <property type="component" value="Chromosome 12"/>
</dbReference>
<dbReference type="RNAct" id="P41181">
    <property type="molecule type" value="protein"/>
</dbReference>
<dbReference type="Bgee" id="ENSG00000167580">
    <property type="expression patterns" value="Expressed in renal medulla and 78 other cell types or tissues"/>
</dbReference>
<dbReference type="ExpressionAtlas" id="P41181">
    <property type="expression patterns" value="baseline and differential"/>
</dbReference>
<dbReference type="GO" id="GO:0016324">
    <property type="term" value="C:apical plasma membrane"/>
    <property type="evidence" value="ECO:0000314"/>
    <property type="project" value="UniProtKB"/>
</dbReference>
<dbReference type="GO" id="GO:0016323">
    <property type="term" value="C:basolateral plasma membrane"/>
    <property type="evidence" value="ECO:0007669"/>
    <property type="project" value="UniProtKB-SubCell"/>
</dbReference>
<dbReference type="GO" id="GO:0070062">
    <property type="term" value="C:extracellular exosome"/>
    <property type="evidence" value="ECO:0000314"/>
    <property type="project" value="UniProtKB"/>
</dbReference>
<dbReference type="GO" id="GO:0005794">
    <property type="term" value="C:Golgi apparatus"/>
    <property type="evidence" value="ECO:0007669"/>
    <property type="project" value="UniProtKB-SubCell"/>
</dbReference>
<dbReference type="GO" id="GO:0098576">
    <property type="term" value="C:lumenal side of membrane"/>
    <property type="evidence" value="ECO:0007669"/>
    <property type="project" value="Ensembl"/>
</dbReference>
<dbReference type="GO" id="GO:0016020">
    <property type="term" value="C:membrane"/>
    <property type="evidence" value="ECO:0000314"/>
    <property type="project" value="MGI"/>
</dbReference>
<dbReference type="GO" id="GO:0048471">
    <property type="term" value="C:perinuclear region of cytoplasm"/>
    <property type="evidence" value="ECO:0007669"/>
    <property type="project" value="Ensembl"/>
</dbReference>
<dbReference type="GO" id="GO:0005886">
    <property type="term" value="C:plasma membrane"/>
    <property type="evidence" value="ECO:0000314"/>
    <property type="project" value="UniProtKB"/>
</dbReference>
<dbReference type="GO" id="GO:0055037">
    <property type="term" value="C:recycling endosome"/>
    <property type="evidence" value="ECO:0007669"/>
    <property type="project" value="Ensembl"/>
</dbReference>
<dbReference type="GO" id="GO:0030658">
    <property type="term" value="C:transport vesicle membrane"/>
    <property type="evidence" value="ECO:0000304"/>
    <property type="project" value="Reactome"/>
</dbReference>
<dbReference type="GO" id="GO:0015168">
    <property type="term" value="F:glycerol transmembrane transporter activity"/>
    <property type="evidence" value="ECO:0000314"/>
    <property type="project" value="UniProtKB"/>
</dbReference>
<dbReference type="GO" id="GO:0015250">
    <property type="term" value="F:water channel activity"/>
    <property type="evidence" value="ECO:0000315"/>
    <property type="project" value="UniProtKB"/>
</dbReference>
<dbReference type="GO" id="GO:0005372">
    <property type="term" value="F:water transmembrane transporter activity"/>
    <property type="evidence" value="ECO:0000314"/>
    <property type="project" value="UniProtKB"/>
</dbReference>
<dbReference type="GO" id="GO:0007015">
    <property type="term" value="P:actin filament organization"/>
    <property type="evidence" value="ECO:0000315"/>
    <property type="project" value="UniProtKB"/>
</dbReference>
<dbReference type="GO" id="GO:0071280">
    <property type="term" value="P:cellular response to copper ion"/>
    <property type="evidence" value="ECO:0000314"/>
    <property type="project" value="UniProtKB"/>
</dbReference>
<dbReference type="GO" id="GO:0071288">
    <property type="term" value="P:cellular response to mercury ion"/>
    <property type="evidence" value="ECO:0000314"/>
    <property type="project" value="UniProtKB"/>
</dbReference>
<dbReference type="GO" id="GO:0042631">
    <property type="term" value="P:cellular response to water deprivation"/>
    <property type="evidence" value="ECO:0007669"/>
    <property type="project" value="Ensembl"/>
</dbReference>
<dbReference type="GO" id="GO:0015793">
    <property type="term" value="P:glycerol transmembrane transport"/>
    <property type="evidence" value="ECO:0000314"/>
    <property type="project" value="UniProtKB"/>
</dbReference>
<dbReference type="GO" id="GO:0072205">
    <property type="term" value="P:metanephric collecting duct development"/>
    <property type="evidence" value="ECO:0007669"/>
    <property type="project" value="Ensembl"/>
</dbReference>
<dbReference type="GO" id="GO:0051289">
    <property type="term" value="P:protein homotetramerization"/>
    <property type="evidence" value="ECO:0000314"/>
    <property type="project" value="UniProtKB"/>
</dbReference>
<dbReference type="GO" id="GO:0003091">
    <property type="term" value="P:renal water homeostasis"/>
    <property type="evidence" value="ECO:0000315"/>
    <property type="project" value="UniProtKB"/>
</dbReference>
<dbReference type="GO" id="GO:0003097">
    <property type="term" value="P:renal water transport"/>
    <property type="evidence" value="ECO:0007669"/>
    <property type="project" value="Ensembl"/>
</dbReference>
<dbReference type="GO" id="GO:0006833">
    <property type="term" value="P:water transport"/>
    <property type="evidence" value="ECO:0000314"/>
    <property type="project" value="UniProtKB"/>
</dbReference>
<dbReference type="CDD" id="cd00333">
    <property type="entry name" value="MIP"/>
    <property type="match status" value="1"/>
</dbReference>
<dbReference type="FunFam" id="1.20.1080.10:FF:000003">
    <property type="entry name" value="Lens fiber major intrinsic"/>
    <property type="match status" value="1"/>
</dbReference>
<dbReference type="Gene3D" id="1.20.1080.10">
    <property type="entry name" value="Glycerol uptake facilitator protein"/>
    <property type="match status" value="1"/>
</dbReference>
<dbReference type="InterPro" id="IPR023271">
    <property type="entry name" value="Aquaporin-like"/>
</dbReference>
<dbReference type="InterPro" id="IPR034294">
    <property type="entry name" value="Aquaporin_transptr"/>
</dbReference>
<dbReference type="InterPro" id="IPR000425">
    <property type="entry name" value="MIP"/>
</dbReference>
<dbReference type="InterPro" id="IPR022357">
    <property type="entry name" value="MIP_CS"/>
</dbReference>
<dbReference type="NCBIfam" id="TIGR00861">
    <property type="entry name" value="MIP"/>
    <property type="match status" value="1"/>
</dbReference>
<dbReference type="PANTHER" id="PTHR19139">
    <property type="entry name" value="AQUAPORIN TRANSPORTER"/>
    <property type="match status" value="1"/>
</dbReference>
<dbReference type="PANTHER" id="PTHR19139:SF45">
    <property type="entry name" value="AQUAPORIN-2"/>
    <property type="match status" value="1"/>
</dbReference>
<dbReference type="Pfam" id="PF00230">
    <property type="entry name" value="MIP"/>
    <property type="match status" value="1"/>
</dbReference>
<dbReference type="PRINTS" id="PR02014">
    <property type="entry name" value="AQUAPORIN2"/>
</dbReference>
<dbReference type="PRINTS" id="PR00783">
    <property type="entry name" value="MINTRINSICP"/>
</dbReference>
<dbReference type="SUPFAM" id="SSF81338">
    <property type="entry name" value="Aquaporin-like"/>
    <property type="match status" value="1"/>
</dbReference>
<dbReference type="PROSITE" id="PS00221">
    <property type="entry name" value="MIP"/>
    <property type="match status" value="1"/>
</dbReference>
<reference key="1">
    <citation type="journal article" date="1994" name="Science">
        <title>Requirement of human renal water channel aquaporin-2 for vasopressin-dependent concentration of urine.</title>
        <authorList>
            <person name="Deen P.M.T."/>
            <person name="Verdijk M.A.J."/>
            <person name="Knoers V.V.A.M."/>
            <person name="Wieringa B."/>
            <person name="Monnens L.A.H."/>
            <person name="van Os C.H."/>
            <person name="van Oost B.A."/>
        </authorList>
    </citation>
    <scope>NUCLEOTIDE SEQUENCE [GENOMIC DNA]</scope>
    <scope>FUNCTION</scope>
    <scope>TRANSPORTER ACTIVITY</scope>
    <scope>SUBCELLULAR LOCATION</scope>
    <scope>VARIANTS NDI2 CYS-187 AND PRO-216</scope>
    <scope>CHARACTERIZATION OF VARIANTS NDI2 CYS-187 AND PRO-216</scope>
</reference>
<reference key="2">
    <citation type="journal article" date="1994" name="J. Biol. Chem.">
        <title>Isolation of human aquaporin-CD gene.</title>
        <authorList>
            <person name="Uchida S."/>
            <person name="Sasaki S."/>
            <person name="Fushimi K."/>
            <person name="Marumo F."/>
        </authorList>
    </citation>
    <scope>NUCLEOTIDE SEQUENCE [GENOMIC DNA]</scope>
</reference>
<reference key="3">
    <citation type="journal article" date="1994" name="Am. J. Hum. Genet.">
        <title>Patients with autosomal nephrogenic diabetes insipidus homozygous for mutations in the aquaporin 2 water-channel gene.</title>
        <authorList>
            <person name="van Lieburg A.F."/>
            <person name="Verdijk M.A.J."/>
            <person name="Knoers V.V.A.M."/>
            <person name="van Essen A.J."/>
            <person name="Proesmans W."/>
            <person name="Mallmann R."/>
            <person name="Monnens L.A.H."/>
            <person name="van Oost B.A."/>
            <person name="van Os C.H."/>
            <person name="Deen P.M.T."/>
        </authorList>
    </citation>
    <scope>NUCLEOTIDE SEQUENCE [MRNA]</scope>
    <scope>FUNCTION</scope>
    <scope>TRANSPORTER ACTIVITY</scope>
    <scope>SUBCELLULAR LOCATION</scope>
    <scope>VARIANTS NDI2 ARG-64; CYS-187 AND PRO-216</scope>
    <scope>CHARACTERIZATION OF VARIANT NDI2 ARG-64</scope>
</reference>
<reference key="4">
    <citation type="journal article" date="1994" name="J. Clin. Invest.">
        <title>Cloning, characterization, and chromosomal mapping of human aquaporin of collecting duct.</title>
        <authorList>
            <person name="Sasaki S."/>
            <person name="Fushimi K."/>
            <person name="Saito H."/>
            <person name="Saito F."/>
            <person name="Uchida S."/>
            <person name="Ishibashi K."/>
            <person name="Kuwahara M."/>
            <person name="Ikeuchi T."/>
            <person name="Inui K."/>
            <person name="Nakajima K."/>
        </authorList>
    </citation>
    <scope>NUCLEOTIDE SEQUENCE [GENOMIC DNA]</scope>
    <scope>FUNCTION</scope>
    <scope>TRANSPORTER ACTIVITY</scope>
    <scope>SUBCELLULAR LOCATION</scope>
    <scope>TISSUE SPECIFICITY</scope>
    <scope>GLYCOSYLATION</scope>
    <source>
        <tissue>Kidney</tissue>
    </source>
</reference>
<reference key="5">
    <citation type="journal article" date="2002" name="Hum. Mol. Genet.">
        <title>Heteroligomerization of an aquaporin-2 mutant with wild-type aquaporin-2 and their misrouting to late endosomes/lysosomes explains dominant nephrogenic diabetes insipidus.</title>
        <authorList>
            <person name="Marr N."/>
            <person name="Bichet D.G."/>
            <person name="Lonergan M."/>
            <person name="Arthus M.-F."/>
            <person name="Jeck N."/>
            <person name="Seyberth H.W."/>
            <person name="Rosenthal W."/>
            <person name="van Os C.H."/>
            <person name="Oksche A."/>
            <person name="Deen P.M.T."/>
        </authorList>
    </citation>
    <scope>NUCLEOTIDE SEQUENCE [GENOMIC DNA]</scope>
    <source>
        <tissue>Kidney</tissue>
    </source>
</reference>
<reference key="6">
    <citation type="journal article" date="2004" name="Genome Res.">
        <title>The status, quality, and expansion of the NIH full-length cDNA project: the Mammalian Gene Collection (MGC).</title>
        <authorList>
            <consortium name="The MGC Project Team"/>
        </authorList>
    </citation>
    <scope>NUCLEOTIDE SEQUENCE [LARGE SCALE MRNA]</scope>
    <source>
        <tissue>Colon</tissue>
    </source>
</reference>
<reference key="7">
    <citation type="journal article" date="1996" name="Pflugers Arch.">
        <title>Glycerol permeability of mutant aquaporin 1 and other AQP-MIP proteins: inhibition studies.</title>
        <authorList>
            <person name="Abrami L."/>
            <person name="Berthonaud V."/>
            <person name="Deen P.M."/>
            <person name="Rousselet G."/>
            <person name="Tacnet F."/>
            <person name="Ripoche P."/>
        </authorList>
    </citation>
    <scope>FUNCTION</scope>
    <scope>TRANSPORTER ACTIVITY</scope>
</reference>
<reference key="8">
    <citation type="journal article" date="2002" name="J. Biol. Chem.">
        <title>The role of putative phosphorylation sites in the targeting and shuttling of the aquaporin-2 water channel.</title>
        <authorList>
            <person name="van Balkom B.W.M."/>
            <person name="Savelkoul P.J.M."/>
            <person name="Markovich D."/>
            <person name="Hofman E."/>
            <person name="Nielsen S."/>
            <person name="van der Sluijs P."/>
            <person name="Deen P.M.T."/>
        </authorList>
    </citation>
    <scope>SUBCELLULAR LOCATION</scope>
    <scope>PHOSPHORYLATION AT SER-256</scope>
    <scope>MUTAGENESIS OF SER-148; SER-229; SER-231; THR-244 AND SER-256</scope>
</reference>
<reference key="9">
    <citation type="journal article" date="2020" name="J. Am. Chem. Soc.">
        <title>Micropeptide MIAC Inhibits HNSCC Progression by Interacting with Aquaporin 2.</title>
        <authorList>
            <person name="Li M."/>
            <person name="Li X."/>
            <person name="Zhang Y."/>
            <person name="Wu H."/>
            <person name="Zhou H."/>
            <person name="Ding X."/>
            <person name="Zhang X."/>
            <person name="Jin X."/>
            <person name="Wang Y."/>
            <person name="Yin X."/>
            <person name="Li C."/>
            <person name="Yang P."/>
            <person name="Xu H."/>
        </authorList>
    </citation>
    <scope>INTERACTION WITH MIAC</scope>
</reference>
<reference evidence="30" key="10">
    <citation type="journal article" date="2022" name="Mol. Cancer">
        <title>Micropeptide MIAC inhibits the tumor progression by interacting with AQP2 and inhibiting EREG/EGFR signaling in renal cell carcinoma.</title>
        <authorList>
            <person name="Li M."/>
            <person name="Liu G."/>
            <person name="Jin X."/>
            <person name="Guo H."/>
            <person name="Setrerrahmane S."/>
            <person name="Xu X."/>
            <person name="Li T."/>
            <person name="Lin Y."/>
            <person name="Xu H."/>
        </authorList>
    </citation>
    <scope>INTERACTION WITH MIAC</scope>
    <scope>MUTAGENESIS OF GLY-78; CYS-79; LEU-217; TYR-221 AND GLU-232</scope>
</reference>
<reference evidence="34" key="11">
    <citation type="journal article" date="2014" name="Proc. Natl. Acad. Sci. U.S.A.">
        <title>X-ray structure of human aquaporin 2 and its implications for nephrogenic diabetes insipidus and trafficking.</title>
        <authorList>
            <person name="Frick A."/>
            <person name="Eriksson U.K."/>
            <person name="de Mattia F."/>
            <person name="Oberg F."/>
            <person name="Hedfalk K."/>
            <person name="Neutze R."/>
            <person name="de Grip W.J."/>
            <person name="Deen P.M."/>
            <person name="Tornroth-Horsefield S."/>
        </authorList>
    </citation>
    <scope>X-RAY CRYSTALLOGRAPHY (2.75 ANGSTROMS) OF 3-241</scope>
    <scope>SUBUNIT</scope>
    <scope>SUBCELLULAR LOCATION</scope>
    <scope>TOPOLOGY</scope>
    <scope>DOMAIN</scope>
</reference>
<reference key="12">
    <citation type="journal article" date="1996" name="Hum. Genet.">
        <title>Two novel mutations in the aquaporin-2 and the vasopressin V2 receptor genes in patients with congenital nephrogenic diabetes insipidus.</title>
        <authorList>
            <person name="Oksche A."/>
            <person name="Moeller A."/>
            <person name="Dickson J."/>
            <person name="Rosendahl W."/>
            <person name="Rascher W."/>
            <person name="Bichet D.G."/>
            <person name="Rosenthal W."/>
        </authorList>
    </citation>
    <scope>VARIANT NDI2 CYS-202</scope>
</reference>
<reference key="13">
    <citation type="journal article" date="1997" name="Hum. Mol. Genet.">
        <title>Identification and characterization of aquaporin-2 water channel mutations causing nephrogenic diabetes insipidus with partial vasopressin response.</title>
        <authorList>
            <person name="Canfield M.C."/>
            <person name="Tamarappoo B.K."/>
            <person name="Moses A.M."/>
            <person name="Verkman A.S."/>
            <person name="Holtzman E.J."/>
        </authorList>
    </citation>
    <scope>VARIANTS NDI2 VAL-22 AND TRP-181</scope>
</reference>
<reference key="14">
    <citation type="journal article" date="1997" name="J. Am. Soc. Nephrol.">
        <title>New mutations in the AQP2 gene in nephrogenic diabetes insipidus resulting in functional but misrouted water channels.</title>
        <authorList>
            <person name="Mulders S.M."/>
            <person name="Knoers N.V."/>
            <person name="Van Lieburg A.F."/>
            <person name="Monnens L.A."/>
            <person name="Leumann E."/>
            <person name="Wuhl E."/>
            <person name="Schober E."/>
            <person name="Rijss J.P.L."/>
            <person name="Van Os C.H."/>
            <person name="Deen P.M.T."/>
        </authorList>
    </citation>
    <scope>VARIANTS NDI2 SER-68; MET-126 AND THR-147</scope>
</reference>
<reference key="15">
    <citation type="journal article" date="1997" name="J. Am. Soc. Nephrol.">
        <title>Mutations in the vasopressin V2 receptor and aquaporin-2 genes in 12 families with congenital nephrogenic diabetes insipidus.</title>
        <authorList>
            <person name="Vargas-Poussou R."/>
            <person name="Forestier L."/>
            <person name="Dautzenberg M.D."/>
            <person name="Niaudet P."/>
            <person name="Dechaux M."/>
            <person name="Antignac C."/>
        </authorList>
    </citation>
    <scope>VARIANTS NDI2 MET-168 AND PRO-216</scope>
</reference>
<reference key="16">
    <citation type="journal article" date="1998" name="Intern. Med.">
        <title>Aquaporin-2, a vasopressin-sensitive water channel, and nephrogenic diabetes insipidus.</title>
        <authorList>
            <person name="Kuwahara M."/>
        </authorList>
    </citation>
    <scope>VARIANTS NDI2 MET-125; ARG-175; THR-190 AND LEU-262</scope>
</reference>
<reference key="17">
    <citation type="journal article" date="1998" name="J. Clin. Invest.">
        <title>An aquaporin-2 water channel mutant which causes autosomal dominant nephrogenic diabetes insipidus is retained in the Golgi complex.</title>
        <authorList>
            <person name="Mulders S.M."/>
            <person name="Bichet D.G."/>
            <person name="Rijss J.P.L."/>
            <person name="Kamsteeg E.-J."/>
            <person name="Arthus M.-F."/>
            <person name="Lonergan M."/>
            <person name="Fujiwara M."/>
            <person name="Morgan K."/>
            <person name="Leijendekker R."/>
            <person name="van der Sluijs P."/>
            <person name="van Os C.H."/>
            <person name="Deen P.M.T."/>
        </authorList>
    </citation>
    <scope>VARIANT NDI2 LYS-258</scope>
</reference>
<reference key="18">
    <citation type="journal article" date="1998" name="J. Clin. Endocrinol. Metab.">
        <title>Novel mutations in aquaporin-2 gene in female siblings with nephrogenic diabetes insipidus: evidence of disrupted water channel function.</title>
        <authorList>
            <person name="Goji K."/>
            <person name="Kuwahara M."/>
            <person name="Gu Y."/>
            <person name="Matsuo M."/>
            <person name="Marumo F."/>
            <person name="Sasaki S."/>
        </authorList>
    </citation>
    <scope>VARIANTS NDI2 MET-125 AND ARG-175</scope>
</reference>
<reference key="19">
    <citation type="journal article" date="2002" name="J. Am. Soc. Nephrol.">
        <title>Cell-biologic and functional analyses of five new Aquaporin-2 missense mutations that cause recessive nephrogenic diabetes insipidus.</title>
        <authorList>
            <person name="Marr N."/>
            <person name="Bichet D.G."/>
            <person name="Hoefs S."/>
            <person name="Savelkoul P.J.M."/>
            <person name="Konings I.B."/>
            <person name="De Mattia F."/>
            <person name="Graat M.P."/>
            <person name="Arthus M.-F."/>
            <person name="Lonergan M."/>
            <person name="Fujiwara T.M."/>
            <person name="Knoers N.V."/>
            <person name="Landau D."/>
            <person name="Balfe W.J."/>
            <person name="Oksche A."/>
            <person name="Rosenthal W."/>
            <person name="Muller D."/>
            <person name="Van Os C.H."/>
            <person name="Deen P.M."/>
        </authorList>
    </citation>
    <scope>VARIANTS NDI2 PRO-28; VAL-47; MET-71; MET-125; ARG-175 AND ALA-185</scope>
    <scope>VARIANT ILE-194</scope>
</reference>
<reference key="20">
    <citation type="journal article" date="2002" name="J. Clin. Endocrinol. Metab.">
        <title>Two novel aquaporin-2 mutations responsible for congenital nephrogenic diabetes insipidus in Chinese families.</title>
        <authorList>
            <person name="Lin S.H."/>
            <person name="Bichet D.G."/>
            <person name="Sasaki S."/>
            <person name="Kuwahara M."/>
            <person name="Arthus M.-F."/>
            <person name="Lonergan M."/>
            <person name="Lin Y.-F."/>
        </authorList>
    </citation>
    <scope>VARIANTS NDI2 PRO-57 AND VAL-100</scope>
</reference>
<reference key="21">
    <citation type="journal article" date="2004" name="Hum. Mol. Genet.">
        <title>A novel mechanism in recessive nephrogenic diabetes insipidus: wild-type aquaporin-2 rescues the apical membrane expression of intracellularly retained AQP2-P262L.</title>
        <authorList>
            <person name="de Mattia F."/>
            <person name="Savelkoul P.J.M."/>
            <person name="Bichet D.G."/>
            <person name="Kamsteeg E.-J."/>
            <person name="Konings I.B.M."/>
            <person name="Marr N."/>
            <person name="Arthus M.-F."/>
            <person name="Lonergan M."/>
            <person name="van Os C.H."/>
            <person name="van der Sluijs P."/>
            <person name="Robertson G."/>
            <person name="Deen P.M.T."/>
        </authorList>
    </citation>
    <scope>VARIANTS NDI2 CYS-187; THR-190 AND LEU-262</scope>
    <scope>CHARACTERIZATION OF VARIANTS NDI2 CYS-187; THR-190 AND LEU-262</scope>
    <scope>FUNCTION</scope>
    <scope>TRANSPORTER ACTIVITY</scope>
    <scope>SUBCELLULAR LOCATION</scope>
    <scope>MUTAGENESIS OF PRO-262</scope>
</reference>
<reference key="22">
    <citation type="journal article" date="2005" name="J. Am. Soc. Nephrol.">
        <title>Lack of arginine vasopressin-induced phosphorylation of aquaporin-2 mutant AQP2-R254L explains dominant nephrogenic diabetes insipidus.</title>
        <authorList>
            <person name="de Mattia F."/>
            <person name="Savelkoul P.J.M."/>
            <person name="Kamsteeg E.-J."/>
            <person name="Konings I.B.M."/>
            <person name="van der Sluijs P."/>
            <person name="Mallmann R."/>
            <person name="Oksche A."/>
            <person name="Deen P.M.T."/>
        </authorList>
    </citation>
    <scope>VARIANT NDI2 LEU-254</scope>
    <scope>CHARACTERIZATION OF VARIANT NDI2 LEU-254</scope>
</reference>
<reference key="23">
    <citation type="journal article" date="2005" name="J. Korean Med. Sci.">
        <title>Two novel mutations in the aquaporin 2 gene in a girl with congenital nephrogenic diabetes insipidus.</title>
        <authorList>
            <person name="Cheong H.I."/>
            <person name="Cho S.J."/>
            <person name="Zheng S.H."/>
            <person name="Cho H.Y."/>
            <person name="Ha I.S."/>
            <person name="Choi Y."/>
        </authorList>
    </citation>
    <scope>VARIANTS NDI2 ASP-70 AND HIS-187</scope>
</reference>
<reference key="24">
    <citation type="journal article" date="2006" name="Genet. Med.">
        <title>Novel mutations underlying nephrogenic diabetes insipidus in Arab families.</title>
        <authorList>
            <person name="Carroll P."/>
            <person name="Al-Mojalli H."/>
            <person name="Al-Abbad A."/>
            <person name="Al-Hassoun I."/>
            <person name="Al-Hamed M."/>
            <person name="Al-Amr R."/>
            <person name="Butt A.I."/>
            <person name="Meyer B.F."/>
        </authorList>
    </citation>
    <scope>VARIANTS NDI2 ARG-100 AND SER-180</scope>
</reference>
<reference key="25">
    <citation type="journal article" date="2009" name="Hum. Mutat.">
        <title>p.R254Q mutation in the aquaporin-2 water channel causing dominant nephrogenic diabetes insipidus is due to a lack of arginine vasopressin-induced phosphorylation.</title>
        <authorList>
            <person name="Savelkoul P.J.M."/>
            <person name="De Mattia F."/>
            <person name="Li Y."/>
            <person name="Kamsteeg E.-J."/>
            <person name="Konings I.B.M."/>
            <person name="van der Sluijs P."/>
            <person name="Deen P.M.T."/>
        </authorList>
    </citation>
    <scope>INVOLVEMENT IN NDI2</scope>
    <scope>VARIANT NDI2 GLN-254</scope>
    <scope>CHARACTERIZATION OF VARIANT NDI2 GLN-254</scope>
</reference>
<reference key="26">
    <citation type="journal article" date="2009" name="Hum. Mutat.">
        <title>Repulsion between Lys258 and upstream arginines explains the missorting of the AQP2 mutant p.Glu258Lys in nephrogenic diabetes insipidus.</title>
        <authorList>
            <person name="Kamsteeg E.-J."/>
            <person name="Stoffels M."/>
            <person name="Tamma G."/>
            <person name="Konings I.B.M."/>
            <person name="Deen P.M.T."/>
        </authorList>
    </citation>
    <scope>MISSORTING MOTIF OF VARIANT NDI2 LYS-258</scope>
</reference>
<reference key="27">
    <citation type="journal article" date="2014" name="Biomed. Rep.">
        <title>Congenital nephrogenic diabetes insipidus with a novel mutation in the aquaporin 2 gene.</title>
        <authorList>
            <person name="Park Y.J."/>
            <person name="Baik H.W."/>
            <person name="Cheong H.I."/>
            <person name="Kang J.H."/>
        </authorList>
    </citation>
    <scope>VARIANT NDI2 MET-108</scope>
</reference>
<evidence type="ECO:0000250" key="1">
    <source>
        <dbReference type="UniProtKB" id="P34080"/>
    </source>
</evidence>
<evidence type="ECO:0000255" key="2"/>
<evidence type="ECO:0000256" key="3">
    <source>
        <dbReference type="SAM" id="MobiDB-lite"/>
    </source>
</evidence>
<evidence type="ECO:0000269" key="4">
    <source>
    </source>
</evidence>
<evidence type="ECO:0000269" key="5">
    <source>
    </source>
</evidence>
<evidence type="ECO:0000269" key="6">
    <source>
    </source>
</evidence>
<evidence type="ECO:0000269" key="7">
    <source>
    </source>
</evidence>
<evidence type="ECO:0000269" key="8">
    <source>
    </source>
</evidence>
<evidence type="ECO:0000269" key="9">
    <source>
    </source>
</evidence>
<evidence type="ECO:0000269" key="10">
    <source>
    </source>
</evidence>
<evidence type="ECO:0000269" key="11">
    <source>
    </source>
</evidence>
<evidence type="ECO:0000269" key="12">
    <source>
    </source>
</evidence>
<evidence type="ECO:0000269" key="13">
    <source>
    </source>
</evidence>
<evidence type="ECO:0000269" key="14">
    <source>
    </source>
</evidence>
<evidence type="ECO:0000269" key="15">
    <source>
    </source>
</evidence>
<evidence type="ECO:0000269" key="16">
    <source>
    </source>
</evidence>
<evidence type="ECO:0000269" key="17">
    <source>
    </source>
</evidence>
<evidence type="ECO:0000269" key="18">
    <source>
    </source>
</evidence>
<evidence type="ECO:0000269" key="19">
    <source>
    </source>
</evidence>
<evidence type="ECO:0000269" key="20">
    <source>
    </source>
</evidence>
<evidence type="ECO:0000269" key="21">
    <source>
    </source>
</evidence>
<evidence type="ECO:0000269" key="22">
    <source>
    </source>
</evidence>
<evidence type="ECO:0000269" key="23">
    <source>
    </source>
</evidence>
<evidence type="ECO:0000269" key="24">
    <source>
    </source>
</evidence>
<evidence type="ECO:0000269" key="25">
    <source>
    </source>
</evidence>
<evidence type="ECO:0000269" key="26">
    <source>
    </source>
</evidence>
<evidence type="ECO:0000269" key="27">
    <source>
    </source>
</evidence>
<evidence type="ECO:0000303" key="28">
    <source>
    </source>
</evidence>
<evidence type="ECO:0000303" key="29">
    <source>
    </source>
</evidence>
<evidence type="ECO:0000305" key="30"/>
<evidence type="ECO:0000305" key="31">
    <source>
    </source>
</evidence>
<evidence type="ECO:0000305" key="32">
    <source>
    </source>
</evidence>
<evidence type="ECO:0000312" key="33">
    <source>
        <dbReference type="HGNC" id="HGNC:634"/>
    </source>
</evidence>
<evidence type="ECO:0007744" key="34">
    <source>
        <dbReference type="PDB" id="4NEF"/>
    </source>
</evidence>
<evidence type="ECO:0007829" key="35">
    <source>
        <dbReference type="PDB" id="4NEF"/>
    </source>
</evidence>
<evidence type="ECO:0007829" key="36">
    <source>
        <dbReference type="PDB" id="8GCL"/>
    </source>
</evidence>
<feature type="chain" id="PRO_0000063934" description="Aquaporin-2">
    <location>
        <begin position="1"/>
        <end position="271"/>
    </location>
</feature>
<feature type="topological domain" description="Cytoplasmic" evidence="31">
    <location>
        <begin position="1"/>
        <end position="11"/>
    </location>
</feature>
<feature type="transmembrane region" description="Helical" evidence="13 34">
    <location>
        <begin position="12"/>
        <end position="32"/>
    </location>
</feature>
<feature type="topological domain" description="Extracellular" evidence="31">
    <location>
        <begin position="33"/>
        <end position="40"/>
    </location>
</feature>
<feature type="transmembrane region" description="Helical" evidence="13 34">
    <location>
        <begin position="41"/>
        <end position="59"/>
    </location>
</feature>
<feature type="topological domain" description="Cytoplasmic" evidence="31">
    <location>
        <begin position="60"/>
        <end position="64"/>
    </location>
</feature>
<feature type="intramembrane region" description="Discontinuously helical" evidence="13 34">
    <location>
        <begin position="65"/>
        <end position="74"/>
    </location>
</feature>
<feature type="topological domain" description="Cytoplasmic" evidence="31">
    <location>
        <begin position="75"/>
        <end position="85"/>
    </location>
</feature>
<feature type="transmembrane region" description="Helical" evidence="13 34">
    <location>
        <begin position="86"/>
        <end position="107"/>
    </location>
</feature>
<feature type="topological domain" description="Extracellular" evidence="31">
    <location>
        <begin position="108"/>
        <end position="127"/>
    </location>
</feature>
<feature type="transmembrane region" description="Helical" evidence="13 34">
    <location>
        <begin position="128"/>
        <end position="148"/>
    </location>
</feature>
<feature type="topological domain" description="Cytoplasmic" evidence="31">
    <location>
        <begin position="149"/>
        <end position="156"/>
    </location>
</feature>
<feature type="transmembrane region" description="Helical" evidence="13 34">
    <location>
        <begin position="157"/>
        <end position="176"/>
    </location>
</feature>
<feature type="topological domain" description="Extracellular" evidence="31">
    <location>
        <begin position="177"/>
        <end position="180"/>
    </location>
</feature>
<feature type="intramembrane region" description="Discontinuously helical" evidence="13 34">
    <location>
        <begin position="181"/>
        <end position="193"/>
    </location>
</feature>
<feature type="topological domain" description="Extracellular" evidence="31">
    <location>
        <begin position="194"/>
        <end position="201"/>
    </location>
</feature>
<feature type="transmembrane region" description="Helical" evidence="13 34">
    <location>
        <begin position="202"/>
        <end position="222"/>
    </location>
</feature>
<feature type="topological domain" description="Cytoplasmic" evidence="31">
    <location>
        <begin position="223"/>
        <end position="271"/>
    </location>
</feature>
<feature type="region of interest" description="Disordered" evidence="3">
    <location>
        <begin position="248"/>
        <end position="271"/>
    </location>
</feature>
<feature type="short sequence motif" description="NPA 1" evidence="31">
    <location>
        <begin position="68"/>
        <end position="70"/>
    </location>
</feature>
<feature type="short sequence motif" description="NPA 2" evidence="31">
    <location>
        <begin position="184"/>
        <end position="186"/>
    </location>
</feature>
<feature type="compositionally biased region" description="Polar residues" evidence="3">
    <location>
        <begin position="261"/>
        <end position="271"/>
    </location>
</feature>
<feature type="modified residue" description="Phosphoserine; by PKA" evidence="6">
    <location>
        <position position="256"/>
    </location>
</feature>
<feature type="glycosylation site" description="N-linked (GlcNAc...) asparagine" evidence="2">
    <location>
        <position position="123"/>
    </location>
</feature>
<feature type="sequence variant" id="VAR_015239" description="In NDI2; dbSNP:rs104894336." evidence="23">
    <original>L</original>
    <variation>V</variation>
    <location>
        <position position="22"/>
    </location>
</feature>
<feature type="sequence variant" id="VAR_015240" description="In NDI2." evidence="5">
    <original>L</original>
    <variation>P</variation>
    <location>
        <position position="28"/>
    </location>
</feature>
<feature type="sequence variant" id="VAR_015241" description="In NDI2; dbSNP:rs995684800." evidence="5">
    <original>A</original>
    <variation>V</variation>
    <location>
        <position position="47"/>
    </location>
</feature>
<feature type="sequence variant" id="VAR_015256" description="In NDI2; dbSNP:rs28931580." evidence="4">
    <original>Q</original>
    <variation>P</variation>
    <location>
        <position position="57"/>
    </location>
</feature>
<feature type="sequence variant" id="VAR_004401" description="In NDI2; loss of water channel activity; dbSNP:rs104894326." evidence="18">
    <original>G</original>
    <variation>R</variation>
    <location>
        <position position="64"/>
    </location>
</feature>
<feature type="sequence variant" id="VAR_015242" description="In NDI2; dbSNP:rs104894331." evidence="22">
    <original>N</original>
    <variation>S</variation>
    <location>
        <position position="68"/>
    </location>
</feature>
<feature type="sequence variant" id="VAR_062585" description="In NDI2." evidence="9">
    <original>A</original>
    <variation>D</variation>
    <location>
        <position position="70"/>
    </location>
</feature>
<feature type="sequence variant" id="VAR_015243" description="In NDI2; dbSNP:rs149659001." evidence="5">
    <original>V</original>
    <variation>M</variation>
    <location>
        <position position="71"/>
    </location>
</feature>
<feature type="sequence variant" id="VAR_062586" description="In NDI2; dbSNP:rs1303076207." evidence="10">
    <original>G</original>
    <variation>R</variation>
    <location>
        <position position="100"/>
    </location>
</feature>
<feature type="sequence variant" id="VAR_015257" description="In NDI2; dbSNP:rs104894338." evidence="4">
    <original>G</original>
    <variation>V</variation>
    <location>
        <position position="100"/>
    </location>
</feature>
<feature type="sequence variant" id="VAR_071370" description="In NDI2; dbSNP:rs1468828294." evidence="14">
    <original>T</original>
    <variation>M</variation>
    <location>
        <position position="108"/>
    </location>
</feature>
<feature type="sequence variant" id="VAR_037577" description="In dbSNP:rs11169226.">
    <original>L</original>
    <variation>F</variation>
    <location>
        <position position="121"/>
    </location>
</feature>
<feature type="sequence variant" id="VAR_015244" description="In NDI2; dbSNP:rs104894333." evidence="5 25 27">
    <original>T</original>
    <variation>M</variation>
    <location>
        <position position="125"/>
    </location>
</feature>
<feature type="sequence variant" id="VAR_015245" description="In NDI2; dbSNP:rs104894330." evidence="22">
    <original>T</original>
    <variation>M</variation>
    <location>
        <position position="126"/>
    </location>
</feature>
<feature type="sequence variant" id="VAR_015246" description="In NDI2; dbSNP:rs104894334." evidence="22">
    <original>A</original>
    <variation>T</variation>
    <location>
        <position position="147"/>
    </location>
</feature>
<feature type="sequence variant" id="VAR_015247" description="In NDI2; dbSNP:rs755694590." evidence="24">
    <original>V</original>
    <variation>M</variation>
    <location>
        <position position="168"/>
    </location>
</feature>
<feature type="sequence variant" id="VAR_015248" description="In NDI2; dbSNP:rs104894335." evidence="5 25 27">
    <original>G</original>
    <variation>R</variation>
    <location>
        <position position="175"/>
    </location>
</feature>
<feature type="sequence variant" id="VAR_062587" description="In NDI2; dbSNP:rs147039983." evidence="10">
    <original>G</original>
    <variation>S</variation>
    <location>
        <position position="180"/>
    </location>
</feature>
<feature type="sequence variant" id="VAR_015249" description="In NDI2; dbSNP:rs104894337." evidence="23">
    <original>C</original>
    <variation>W</variation>
    <location>
        <position position="181"/>
    </location>
</feature>
<feature type="sequence variant" id="VAR_015250" description="In NDI2; dbSNP:rs761713751." evidence="5">
    <original>P</original>
    <variation>A</variation>
    <location>
        <position position="185"/>
    </location>
</feature>
<feature type="sequence variant" id="VAR_004402" description="In NDI2; loss of water channel activity; mutant protein does not fold properly; dbSNP:rs104894328." evidence="7 18 19">
    <original>R</original>
    <variation>C</variation>
    <location>
        <position position="187"/>
    </location>
</feature>
<feature type="sequence variant" id="VAR_062588" description="In NDI2; dbSNP:rs193922495." evidence="9">
    <original>R</original>
    <variation>H</variation>
    <location>
        <position position="187"/>
    </location>
</feature>
<feature type="sequence variant" id="VAR_015251" description="In NDI2; mutant protein does not fold properly and is not functional; dbSNP:rs104894341." evidence="7 25">
    <original>A</original>
    <variation>T</variation>
    <location>
        <position position="190"/>
    </location>
</feature>
<feature type="sequence variant" id="VAR_015252" description="In dbSNP:rs772051028." evidence="5">
    <original>V</original>
    <variation>I</variation>
    <location>
        <position position="194"/>
    </location>
</feature>
<feature type="sequence variant" id="VAR_015253" description="In NDI2." evidence="21">
    <original>W</original>
    <variation>C</variation>
    <location>
        <position position="202"/>
    </location>
</feature>
<feature type="sequence variant" id="VAR_004403" description="In NDI2; loss of water channel activity; dbSNP:rs104894329." evidence="18 19 24">
    <original>S</original>
    <variation>P</variation>
    <location>
        <position position="216"/>
    </location>
</feature>
<feature type="sequence variant" id="VAR_062589" description="In NDI2; results in the loss of arginine vasopressin-mediated phosphorylation at S-256." evidence="8">
    <original>R</original>
    <variation>L</variation>
    <location>
        <position position="254"/>
    </location>
</feature>
<feature type="sequence variant" id="VAR_062590" description="In NDI2; exerts a dominant-negative effect on wild-type-AQP2 in that it interferes with its trafficking to the apical membrane; is a loss of function instead of a gain of function mutation on dominant nephrogenic diabetes insipidus." evidence="11">
    <original>R</original>
    <variation>Q</variation>
    <location>
        <position position="254"/>
    </location>
</feature>
<feature type="sequence variant" id="VAR_015254" description="In NDI2; retained in the Golgi compartment; dbSNP:rs104894332." evidence="12 26">
    <original>E</original>
    <variation>K</variation>
    <location>
        <position position="258"/>
    </location>
</feature>
<feature type="sequence variant" id="VAR_015255" description="In NDI2; mutant protein folds properly and is functional but is retained in intracellular vesicles; able to assemble into tetramers with wild-type AQP2 that properly localize to the apical membrane; dbSNP:rs104894339." evidence="7 25">
    <original>P</original>
    <variation>L</variation>
    <location>
        <position position="262"/>
    </location>
</feature>
<feature type="mutagenesis site" description="Does not affect interaction with MIAC; when associated with A-79." evidence="16">
    <original>G</original>
    <variation>A</variation>
    <location>
        <position position="78"/>
    </location>
</feature>
<feature type="mutagenesis site" description="Does not affect interaction with MIAC; when associated with A-78." evidence="16">
    <original>C</original>
    <variation>A</variation>
    <location>
        <position position="79"/>
    </location>
</feature>
<feature type="mutagenesis site" description="No effect on sorting from the ER to the vesicles, redistribution to apical membrane, or endocytosis." evidence="6">
    <original>S</original>
    <variation>A</variation>
    <location>
        <position position="148"/>
    </location>
</feature>
<feature type="mutagenesis site" description="Retained in the endoplasmic reticulum." evidence="6">
    <original>S</original>
    <variation>D</variation>
    <location>
        <position position="148"/>
    </location>
</feature>
<feature type="mutagenesis site" description="Abolishes interaction with MIAC; when associated with A-221." evidence="16">
    <original>L</original>
    <variation>A</variation>
    <location>
        <position position="217"/>
    </location>
</feature>
<feature type="mutagenesis site" description="Abolishes interaction with MIAC; when associated with A-217." evidence="16">
    <original>Y</original>
    <variation>A</variation>
    <location>
        <position position="221"/>
    </location>
</feature>
<feature type="mutagenesis site" description="No effect on sorting from the ER to the vesicles, redistribution to apical membrane, or endocytosis." evidence="6">
    <original>S</original>
    <variation>A</variation>
    <location>
        <position position="229"/>
    </location>
</feature>
<feature type="mutagenesis site" description="No effect on sorting from the ER to the vesicles, redistribution to apical membrane, or endocytosis." evidence="6">
    <original>S</original>
    <variation>D</variation>
    <location>
        <position position="229"/>
    </location>
</feature>
<feature type="mutagenesis site" description="No effect on sorting from the ER to the vesicles, redistribution to apical membrane, or endocytosis." evidence="6">
    <original>S</original>
    <variation>A</variation>
    <location>
        <position position="231"/>
    </location>
</feature>
<feature type="mutagenesis site" description="No effect on sorting from the ER to the vesicles, redistribution to apical membrane, or endocytosis." evidence="6">
    <original>S</original>
    <variation>D</variation>
    <location>
        <position position="231"/>
    </location>
</feature>
<feature type="mutagenesis site" description="Reduces interaction with MIAC." evidence="16">
    <original>E</original>
    <variation>A</variation>
    <location>
        <position position="232"/>
    </location>
</feature>
<feature type="mutagenesis site" description="No effect on sorting from the ER to the vesicles, redistribution to apical membrane, or endocytosis." evidence="6">
    <original>T</original>
    <variation>A</variation>
    <location>
        <position position="244"/>
    </location>
</feature>
<feature type="mutagenesis site" description="No effect on sorting from the ER to the vesicles, redistribution to apical membrane, or endocytosis." evidence="6">
    <original>T</original>
    <variation>E</variation>
    <location>
        <position position="244"/>
    </location>
</feature>
<feature type="mutagenesis site" description="Retained in vesicles." evidence="6">
    <original>S</original>
    <variation>A</variation>
    <location>
        <position position="256"/>
    </location>
</feature>
<feature type="mutagenesis site" description="Expressed in the apical membrane." evidence="6">
    <original>S</original>
    <variation>D</variation>
    <location>
        <position position="256"/>
    </location>
</feature>
<feature type="mutagenesis site" description="No effect on expression at the apical cell membrane." evidence="7">
    <original>P</original>
    <variation>A</variation>
    <location>
        <position position="262"/>
    </location>
</feature>
<feature type="sequence conflict" description="In Ref. 4." evidence="30" ref="4">
    <original>PQAL</original>
    <variation>ATAP</variation>
    <location>
        <begin position="35"/>
        <end position="38"/>
    </location>
</feature>
<feature type="sequence conflict" description="In Ref. 4." evidence="30" ref="4">
    <original>V</original>
    <variation>F</variation>
    <location>
        <position position="83"/>
    </location>
</feature>
<feature type="helix" evidence="35">
    <location>
        <begin position="7"/>
        <end position="32"/>
    </location>
</feature>
<feature type="strand" evidence="35">
    <location>
        <begin position="35"/>
        <end position="37"/>
    </location>
</feature>
<feature type="helix" evidence="35">
    <location>
        <begin position="41"/>
        <end position="63"/>
    </location>
</feature>
<feature type="helix" evidence="35">
    <location>
        <begin position="69"/>
        <end position="77"/>
    </location>
</feature>
<feature type="helix" evidence="35">
    <location>
        <begin position="83"/>
        <end position="107"/>
    </location>
</feature>
<feature type="helix" evidence="35">
    <location>
        <begin position="110"/>
        <end position="113"/>
    </location>
</feature>
<feature type="helix" evidence="35">
    <location>
        <begin position="127"/>
        <end position="148"/>
    </location>
</feature>
<feature type="helix" evidence="36">
    <location>
        <begin position="151"/>
        <end position="153"/>
    </location>
</feature>
<feature type="helix" evidence="35">
    <location>
        <begin position="159"/>
        <end position="179"/>
    </location>
</feature>
<feature type="helix" evidence="35">
    <location>
        <begin position="185"/>
        <end position="195"/>
    </location>
</feature>
<feature type="turn" evidence="35">
    <location>
        <begin position="199"/>
        <end position="202"/>
    </location>
</feature>
<feature type="helix" evidence="35">
    <location>
        <begin position="203"/>
        <end position="221"/>
    </location>
</feature>
<feature type="helix" evidence="35">
    <location>
        <begin position="232"/>
        <end position="237"/>
    </location>
</feature>
<protein>
    <recommendedName>
        <fullName evidence="29">Aquaporin-2</fullName>
        <shortName>AQP-2</shortName>
    </recommendedName>
    <alternativeName>
        <fullName>ADH water channel</fullName>
    </alternativeName>
    <alternativeName>
        <fullName evidence="28">Aquaporin-CD</fullName>
        <shortName evidence="28">AQP-CD</shortName>
    </alternativeName>
    <alternativeName>
        <fullName>Collecting duct water channel protein</fullName>
    </alternativeName>
    <alternativeName>
        <fullName>WCH-CD</fullName>
    </alternativeName>
    <alternativeName>
        <fullName>Water channel protein for renal collecting duct</fullName>
    </alternativeName>
</protein>
<keyword id="KW-0002">3D-structure</keyword>
<keyword id="KW-1003">Cell membrane</keyword>
<keyword id="KW-0968">Cytoplasmic vesicle</keyword>
<keyword id="KW-0218">Diabetes insipidus</keyword>
<keyword id="KW-0225">Disease variant</keyword>
<keyword id="KW-0325">Glycoprotein</keyword>
<keyword id="KW-0333">Golgi apparatus</keyword>
<keyword id="KW-0472">Membrane</keyword>
<keyword id="KW-0597">Phosphoprotein</keyword>
<keyword id="KW-1267">Proteomics identification</keyword>
<keyword id="KW-1185">Reference proteome</keyword>
<keyword id="KW-0677">Repeat</keyword>
<keyword id="KW-0812">Transmembrane</keyword>
<keyword id="KW-1133">Transmembrane helix</keyword>
<keyword id="KW-0813">Transport</keyword>
<organism>
    <name type="scientific">Homo sapiens</name>
    <name type="common">Human</name>
    <dbReference type="NCBI Taxonomy" id="9606"/>
    <lineage>
        <taxon>Eukaryota</taxon>
        <taxon>Metazoa</taxon>
        <taxon>Chordata</taxon>
        <taxon>Craniata</taxon>
        <taxon>Vertebrata</taxon>
        <taxon>Euteleostomi</taxon>
        <taxon>Mammalia</taxon>
        <taxon>Eutheria</taxon>
        <taxon>Euarchontoglires</taxon>
        <taxon>Primates</taxon>
        <taxon>Haplorrhini</taxon>
        <taxon>Catarrhini</taxon>
        <taxon>Hominidae</taxon>
        <taxon>Homo</taxon>
    </lineage>
</organism>
<comment type="function">
    <text evidence="7 17 18 19 20">Forms a water-specific channel that provides the plasma membranes of renal collecting duct with high permeability to water, thereby permitting water to move in the direction of an osmotic gradient (PubMed:15509592, PubMed:7510718, PubMed:7524315, PubMed:8140421, PubMed:8584435). Plays an essential role in renal water homeostasis (PubMed:15509592, PubMed:7524315, PubMed:8140421). Could also be permeable to glycerol (PubMed:8584435).</text>
</comment>
<comment type="catalytic activity">
    <reaction evidence="7 17 18 19 20">
        <text>H2O(in) = H2O(out)</text>
        <dbReference type="Rhea" id="RHEA:29667"/>
        <dbReference type="ChEBI" id="CHEBI:15377"/>
    </reaction>
</comment>
<comment type="catalytic activity">
    <reaction evidence="32">
        <text>glycerol(in) = glycerol(out)</text>
        <dbReference type="Rhea" id="RHEA:29675"/>
        <dbReference type="ChEBI" id="CHEBI:17754"/>
    </reaction>
</comment>
<comment type="subunit">
    <text evidence="13 15 16">Homotetramer (PubMed:24733887). Interacts with micropeptide MIAC; the interaction leads to a reduction of filamentous actin fibers and inhibition of the EREG/EGFR signaling pathway (PubMed:32176498, PubMed:36117171).</text>
</comment>
<comment type="interaction">
    <interactant intactId="EBI-12701138">
        <id>P41181</id>
    </interactant>
    <interactant intactId="EBI-358858">
        <id>O14735</id>
        <label>CDIPT</label>
    </interactant>
    <organismsDiffer>false</organismsDiffer>
    <experiments>3</experiments>
</comment>
<comment type="interaction">
    <interactant intactId="EBI-12701138">
        <id>P41181</id>
    </interactant>
    <interactant intactId="EBI-625022">
        <id>O43889-2</id>
        <label>CREB3</label>
    </interactant>
    <organismsDiffer>false</organismsDiffer>
    <experiments>3</experiments>
</comment>
<comment type="interaction">
    <interactant intactId="EBI-12701138">
        <id>P41181</id>
    </interactant>
    <interactant intactId="EBI-6942903">
        <id>Q96BA8</id>
        <label>CREB3L1</label>
    </interactant>
    <organismsDiffer>false</organismsDiffer>
    <experiments>3</experiments>
</comment>
<comment type="interaction">
    <interactant intactId="EBI-12701138">
        <id>P41181</id>
    </interactant>
    <interactant intactId="EBI-1753674">
        <id>P52803</id>
        <label>EFNA5</label>
    </interactant>
    <organismsDiffer>false</organismsDiffer>
    <experiments>3</experiments>
</comment>
<comment type="interaction">
    <interactant intactId="EBI-12701138">
        <id>P41181</id>
    </interactant>
    <interactant intactId="EBI-711490">
        <id>Q9UKR5</id>
        <label>ERG28</label>
    </interactant>
    <organismsDiffer>false</organismsDiffer>
    <experiments>3</experiments>
</comment>
<comment type="interaction">
    <interactant intactId="EBI-12701138">
        <id>P41181</id>
    </interactant>
    <interactant intactId="EBI-781551">
        <id>Q9Y282</id>
        <label>ERGIC3</label>
    </interactant>
    <organismsDiffer>false</organismsDiffer>
    <experiments>3</experiments>
</comment>
<comment type="interaction">
    <interactant intactId="EBI-12701138">
        <id>P41181</id>
    </interactant>
    <interactant intactId="EBI-10976398">
        <id>Q7Z2K6</id>
        <label>ERMP1</label>
    </interactant>
    <organismsDiffer>false</organismsDiffer>
    <experiments>3</experiments>
</comment>
<comment type="interaction">
    <interactant intactId="EBI-12701138">
        <id>P41181</id>
    </interactant>
    <interactant intactId="EBI-18304435">
        <id>Q5JX71</id>
        <label>FAM209A</label>
    </interactant>
    <organismsDiffer>false</organismsDiffer>
    <experiments>3</experiments>
</comment>
<comment type="interaction">
    <interactant intactId="EBI-12701138">
        <id>P41181</id>
    </interactant>
    <interactant intactId="EBI-2876774">
        <id>Q92520</id>
        <label>FAM3C</label>
    </interactant>
    <organismsDiffer>false</organismsDiffer>
    <experiments>3</experiments>
</comment>
<comment type="interaction">
    <interactant intactId="EBI-12701138">
        <id>P41181</id>
    </interactant>
    <interactant intactId="EBI-11721746">
        <id>Q8TED1</id>
        <label>GPX8</label>
    </interactant>
    <organismsDiffer>false</organismsDiffer>
    <experiments>3</experiments>
</comment>
<comment type="interaction">
    <interactant intactId="EBI-12701138">
        <id>P41181</id>
    </interactant>
    <interactant intactId="EBI-720480">
        <id>P24593</id>
        <label>IGFBP5</label>
    </interactant>
    <organismsDiffer>false</organismsDiffer>
    <experiments>3</experiments>
</comment>
<comment type="interaction">
    <interactant intactId="EBI-12701138">
        <id>P41181</id>
    </interactant>
    <interactant intactId="EBI-8503746">
        <id>Q9Y5U4</id>
        <label>INSIG2</label>
    </interactant>
    <organismsDiffer>false</organismsDiffer>
    <experiments>3</experiments>
</comment>
<comment type="interaction">
    <interactant intactId="EBI-12701138">
        <id>P41181</id>
    </interactant>
    <interactant intactId="EBI-17490413">
        <id>A8MZ59</id>
        <label>LEUTX</label>
    </interactant>
    <organismsDiffer>false</organismsDiffer>
    <experiments>3</experiments>
</comment>
<comment type="interaction">
    <interactant intactId="EBI-12701138">
        <id>P41181</id>
    </interactant>
    <interactant intactId="EBI-2820517">
        <id>Q8TAF8</id>
        <label>LHFPL5</label>
    </interactant>
    <organismsDiffer>false</organismsDiffer>
    <experiments>3</experiments>
</comment>
<comment type="interaction">
    <interactant intactId="EBI-12701138">
        <id>P41181</id>
    </interactant>
    <interactant intactId="EBI-5454865">
        <id>Q6IN84</id>
        <label>MRM1</label>
    </interactant>
    <organismsDiffer>false</organismsDiffer>
    <experiments>3</experiments>
</comment>
<comment type="interaction">
    <interactant intactId="EBI-12701138">
        <id>P41181</id>
    </interactant>
    <interactant intactId="EBI-12070086">
        <id>Q5J8X5</id>
        <label>MS4A13</label>
    </interactant>
    <organismsDiffer>false</organismsDiffer>
    <experiments>3</experiments>
</comment>
<comment type="interaction">
    <interactant intactId="EBI-12701138">
        <id>P41181</id>
    </interactant>
    <interactant intactId="EBI-17263240">
        <id>P15941-11</id>
        <label>MUC1</label>
    </interactant>
    <organismsDiffer>false</organismsDiffer>
    <experiments>3</experiments>
</comment>
<comment type="interaction">
    <interactant intactId="EBI-12701138">
        <id>P41181</id>
    </interactant>
    <interactant intactId="EBI-10262547">
        <id>Q8IXM6</id>
        <label>NRM</label>
    </interactant>
    <organismsDiffer>false</organismsDiffer>
    <experiments>3</experiments>
</comment>
<comment type="interaction">
    <interactant intactId="EBI-12701138">
        <id>P41181</id>
    </interactant>
    <interactant intactId="EBI-2804156">
        <id>Q6UX06</id>
        <label>OLFM4</label>
    </interactant>
    <organismsDiffer>false</organismsDiffer>
    <experiments>3</experiments>
</comment>
<comment type="interaction">
    <interactant intactId="EBI-12701138">
        <id>P41181</id>
    </interactant>
    <interactant intactId="EBI-13339917">
        <id>Q8NH19</id>
        <label>OR10AG1</label>
    </interactant>
    <organismsDiffer>false</organismsDiffer>
    <experiments>3</experiments>
</comment>
<comment type="interaction">
    <interactant intactId="EBI-12701138">
        <id>P41181</id>
    </interactant>
    <interactant intactId="EBI-7037612">
        <id>Q96RD7</id>
        <label>PANX1</label>
    </interactant>
    <organismsDiffer>false</organismsDiffer>
    <experiments>3</experiments>
</comment>
<comment type="interaction">
    <interactant intactId="EBI-12701138">
        <id>P41181</id>
    </interactant>
    <interactant intactId="EBI-716063">
        <id>Q13113</id>
        <label>PDZK1IP1</label>
    </interactant>
    <organismsDiffer>false</organismsDiffer>
    <experiments>3</experiments>
</comment>
<comment type="interaction">
    <interactant intactId="EBI-12701138">
        <id>P41181</id>
    </interactant>
    <interactant intactId="EBI-2845982">
        <id>Q01453</id>
        <label>PMP22</label>
    </interactant>
    <organismsDiffer>false</organismsDiffer>
    <experiments>3</experiments>
</comment>
<comment type="interaction">
    <interactant intactId="EBI-12701138">
        <id>P41181</id>
    </interactant>
    <interactant intactId="EBI-8652812">
        <id>P54315</id>
        <label>PNLIPRP1</label>
    </interactant>
    <organismsDiffer>false</organismsDiffer>
    <experiments>3</experiments>
</comment>
<comment type="interaction">
    <interactant intactId="EBI-12701138">
        <id>P41181</id>
    </interactant>
    <interactant intactId="EBI-14210385">
        <id>Q59EV6</id>
        <label>PPGB</label>
    </interactant>
    <organismsDiffer>false</organismsDiffer>
    <experiments>3</experiments>
</comment>
<comment type="interaction">
    <interactant intactId="EBI-12701138">
        <id>P41181</id>
    </interactant>
    <interactant intactId="EBI-10244780">
        <id>Q5QGT7</id>
        <label>RTP2</label>
    </interactant>
    <organismsDiffer>false</organismsDiffer>
    <experiments>3</experiments>
</comment>
<comment type="interaction">
    <interactant intactId="EBI-12701138">
        <id>P41181</id>
    </interactant>
    <interactant intactId="EBI-12814225">
        <id>Q9BXS9-3</id>
        <label>SLC26A6</label>
    </interactant>
    <organismsDiffer>false</organismsDiffer>
    <experiments>3</experiments>
</comment>
<comment type="interaction">
    <interactant intactId="EBI-12701138">
        <id>P41181</id>
    </interactant>
    <interactant intactId="EBI-8644112">
        <id>Q9BRI3</id>
        <label>SLC30A2</label>
    </interactant>
    <organismsDiffer>false</organismsDiffer>
    <experiments>3</experiments>
</comment>
<comment type="interaction">
    <interactant intactId="EBI-12701138">
        <id>P41181</id>
    </interactant>
    <interactant intactId="EBI-10314552">
        <id>Q9NVC3</id>
        <label>SLC38A7</label>
    </interactant>
    <organismsDiffer>false</organismsDiffer>
    <experiments>3</experiments>
</comment>
<comment type="interaction">
    <interactant intactId="EBI-12701138">
        <id>P41181</id>
    </interactant>
    <interactant intactId="EBI-10244848">
        <id>Q5SQN1</id>
        <label>SNAP47</label>
    </interactant>
    <organismsDiffer>false</organismsDiffer>
    <experiments>3</experiments>
</comment>
<comment type="interaction">
    <interactant intactId="EBI-12701138">
        <id>P41181</id>
    </interactant>
    <interactant intactId="EBI-1057733">
        <id>Q9BVC6</id>
        <label>TMEM109</label>
    </interactant>
    <organismsDiffer>false</organismsDiffer>
    <experiments>3</experiments>
</comment>
<comment type="interaction">
    <interactant intactId="EBI-12701138">
        <id>P41181</id>
    </interactant>
    <interactant intactId="EBI-10173151">
        <id>A2RU14</id>
        <label>TMEM218</label>
    </interactant>
    <organismsDiffer>false</organismsDiffer>
    <experiments>3</experiments>
</comment>
<comment type="interaction">
    <interactant intactId="EBI-12701138">
        <id>P41181</id>
    </interactant>
    <interactant intactId="EBI-13378608">
        <id>Q5W0B7</id>
        <label>TMEM236</label>
    </interactant>
    <organismsDiffer>false</organismsDiffer>
    <experiments>3</experiments>
</comment>
<comment type="interaction">
    <interactant intactId="EBI-12701138">
        <id>P41181</id>
    </interactant>
    <interactant intactId="EBI-2852148">
        <id>Q9H2L4</id>
        <label>TMEM60</label>
    </interactant>
    <organismsDiffer>false</organismsDiffer>
    <experiments>3</experiments>
</comment>
<comment type="interaction">
    <interactant intactId="EBI-12701138">
        <id>P41181</id>
    </interactant>
    <interactant intactId="EBI-12015604">
        <id>Q8N2M4</id>
        <label>TMEM86A</label>
    </interactant>
    <organismsDiffer>false</organismsDiffer>
    <experiments>3</experiments>
</comment>
<comment type="interaction">
    <interactant intactId="EBI-12701138">
        <id>P41181</id>
    </interactant>
    <interactant intactId="EBI-12111910">
        <id>Q5BJF2</id>
        <label>TMEM97</label>
    </interactant>
    <organismsDiffer>false</organismsDiffer>
    <experiments>3</experiments>
</comment>
<comment type="interaction">
    <interactant intactId="EBI-12701138">
        <id>P41181</id>
    </interactant>
    <interactant intactId="EBI-11988865">
        <id>A5PKU2</id>
        <label>TUSC5</label>
    </interactant>
    <organismsDiffer>false</organismsDiffer>
    <experiments>3</experiments>
</comment>
<comment type="interaction">
    <interactant intactId="EBI-12701138">
        <id>P41181</id>
    </interactant>
    <interactant intactId="EBI-751210">
        <id>Q96EC8</id>
        <label>YIPF6</label>
    </interactant>
    <organismsDiffer>false</organismsDiffer>
    <experiments>3</experiments>
</comment>
<comment type="subcellular location">
    <subcellularLocation>
        <location evidence="6 7 17">Apical cell membrane</location>
        <topology evidence="13">Multi-pass membrane protein</topology>
    </subcellularLocation>
    <subcellularLocation>
        <location evidence="1">Basolateral cell membrane</location>
        <topology evidence="13">Multi-pass membrane protein</topology>
    </subcellularLocation>
    <subcellularLocation>
        <location evidence="7 13 18 19">Cell membrane</location>
        <topology evidence="13">Multi-pass membrane protein</topology>
    </subcellularLocation>
    <subcellularLocation>
        <location evidence="6 7">Cytoplasmic vesicle membrane</location>
        <topology evidence="13">Multi-pass membrane protein</topology>
    </subcellularLocation>
    <subcellularLocation>
        <location evidence="6">Golgi apparatus</location>
        <location evidence="6">trans-Golgi network membrane</location>
        <topology evidence="6 13">Multi-pass membrane protein</topology>
    </subcellularLocation>
    <text evidence="1 7">Shuttles from vesicles to the apical membrane (PubMed:15509592). Vasopressin-regulated phosphorylation is required for translocation to the apical cell membrane (PubMed:15509592). PLEKHA8/FAPP2 is required to transport AQP2 from the TGN to sites where AQP2 is phosphorylated (By similarity).</text>
</comment>
<comment type="tissue specificity">
    <text evidence="17">Expressed in collecting tubules in kidney medulla (at protein level) (PubMed:7510718). Detected in kidney (PubMed:7510718).</text>
</comment>
<comment type="domain">
    <text evidence="13">Aquaporins contain two tandem repeats each containing three membrane-spanning domains and a pore-forming loop with the signature motif Asn-Pro-Ala (NPA).</text>
</comment>
<comment type="PTM">
    <text evidence="6">Ser-256 phosphorylation is necessary and sufficient for expression at the apical membrane. Endocytosis is not phosphorylation-dependent.</text>
</comment>
<comment type="PTM">
    <text evidence="17">N-glycosylated.</text>
</comment>
<comment type="disease" evidence="4 5 7 8 9 10 11 12 14 18 19 21 22 23 24 25 26 27">
    <disease id="DI-00390">
        <name>Diabetes insipidus, nephrogenic, 2, autosomal</name>
        <acronym>NDI2</acronym>
        <description>A disorder caused by the inability of the renal collecting ducts to absorb water in response to arginine vasopressin. Characterized by excessive water drinking (polydipsia), excessive urine excretion (polyuria), persistent hypotonic urine, and hypokalemia. Inheritance can be autosomal dominant or recessive.</description>
        <dbReference type="MIM" id="125800"/>
    </disease>
    <text>The disease is caused by variants affecting the gene represented in this entry.</text>
</comment>
<comment type="similarity">
    <text evidence="30">Belongs to the MIP/aquaporin (TC 1.A.8) family.</text>
</comment>
<accession>P41181</accession>
<accession>Q9UD68</accession>
<proteinExistence type="evidence at protein level"/>
<name>AQP2_HUMAN</name>